<name>PSBF_SYNJB</name>
<proteinExistence type="inferred from homology"/>
<accession>Q2JLE9</accession>
<comment type="function">
    <text evidence="1">This b-type cytochrome is tightly associated with the reaction center of photosystem II (PSII). PSII is a light-driven water:plastoquinone oxidoreductase that uses light energy to abstract electrons from H(2)O, generating O(2) and a proton gradient subsequently used for ATP formation. It consists of a core antenna complex that captures photons, and an electron transfer chain that converts photonic excitation into a charge separation.</text>
</comment>
<comment type="cofactor">
    <cofactor evidence="1">
        <name>heme b</name>
        <dbReference type="ChEBI" id="CHEBI:60344"/>
    </cofactor>
    <text evidence="1">With its partner (PsbE) binds heme. PSII binds additional chlorophylls, carotenoids and specific lipids.</text>
</comment>
<comment type="subunit">
    <text evidence="1">Heterodimer of an alpha subunit and a beta subunit. PSII is composed of 1 copy each of membrane proteins PsbA, PsbB, PsbC, PsbD, PsbE, PsbF, PsbH, PsbI, PsbJ, PsbK, PsbL, PsbM, PsbT, PsbX, PsbY, PsbZ, Psb30/Ycf12, peripheral proteins PsbO, CyanoQ (PsbQ), PsbU, PsbV and a large number of cofactors. It forms dimeric complexes.</text>
</comment>
<comment type="subcellular location">
    <subcellularLocation>
        <location evidence="1">Cellular thylakoid membrane</location>
        <topology evidence="1">Single-pass membrane protein</topology>
    </subcellularLocation>
</comment>
<comment type="similarity">
    <text evidence="1">Belongs to the PsbE/PsbF family.</text>
</comment>
<reference key="1">
    <citation type="journal article" date="2007" name="ISME J.">
        <title>Population level functional diversity in a microbial community revealed by comparative genomic and metagenomic analyses.</title>
        <authorList>
            <person name="Bhaya D."/>
            <person name="Grossman A.R."/>
            <person name="Steunou A.-S."/>
            <person name="Khuri N."/>
            <person name="Cohan F.M."/>
            <person name="Hamamura N."/>
            <person name="Melendrez M.C."/>
            <person name="Bateson M.M."/>
            <person name="Ward D.M."/>
            <person name="Heidelberg J.F."/>
        </authorList>
    </citation>
    <scope>NUCLEOTIDE SEQUENCE [LARGE SCALE GENOMIC DNA]</scope>
    <source>
        <strain>JA-2-3B'a(2-13)</strain>
    </source>
</reference>
<protein>
    <recommendedName>
        <fullName evidence="1">Cytochrome b559 subunit beta</fullName>
    </recommendedName>
    <alternativeName>
        <fullName evidence="1">PSII reaction center subunit VI</fullName>
    </alternativeName>
</protein>
<dbReference type="EMBL" id="CP000240">
    <property type="protein sequence ID" value="ABD02462.1"/>
    <property type="molecule type" value="Genomic_DNA"/>
</dbReference>
<dbReference type="RefSeq" id="WP_011433110.1">
    <property type="nucleotide sequence ID" value="NC_007776.1"/>
</dbReference>
<dbReference type="SMR" id="Q2JLE9"/>
<dbReference type="STRING" id="321332.CYB_1496"/>
<dbReference type="KEGG" id="cyb:CYB_1496"/>
<dbReference type="eggNOG" id="ENOG50332KX">
    <property type="taxonomic scope" value="Bacteria"/>
</dbReference>
<dbReference type="HOGENOM" id="CLU_211753_1_0_3"/>
<dbReference type="OrthoDB" id="532613at2"/>
<dbReference type="Proteomes" id="UP000001938">
    <property type="component" value="Chromosome"/>
</dbReference>
<dbReference type="GO" id="GO:0009539">
    <property type="term" value="C:photosystem II reaction center"/>
    <property type="evidence" value="ECO:0007669"/>
    <property type="project" value="InterPro"/>
</dbReference>
<dbReference type="GO" id="GO:0031676">
    <property type="term" value="C:plasma membrane-derived thylakoid membrane"/>
    <property type="evidence" value="ECO:0007669"/>
    <property type="project" value="UniProtKB-SubCell"/>
</dbReference>
<dbReference type="GO" id="GO:0009055">
    <property type="term" value="F:electron transfer activity"/>
    <property type="evidence" value="ECO:0007669"/>
    <property type="project" value="UniProtKB-UniRule"/>
</dbReference>
<dbReference type="GO" id="GO:0020037">
    <property type="term" value="F:heme binding"/>
    <property type="evidence" value="ECO:0007669"/>
    <property type="project" value="InterPro"/>
</dbReference>
<dbReference type="GO" id="GO:0005506">
    <property type="term" value="F:iron ion binding"/>
    <property type="evidence" value="ECO:0007669"/>
    <property type="project" value="UniProtKB-UniRule"/>
</dbReference>
<dbReference type="GO" id="GO:0009767">
    <property type="term" value="P:photosynthetic electron transport chain"/>
    <property type="evidence" value="ECO:0007669"/>
    <property type="project" value="InterPro"/>
</dbReference>
<dbReference type="HAMAP" id="MF_00643">
    <property type="entry name" value="PSII_PsbF"/>
    <property type="match status" value="1"/>
</dbReference>
<dbReference type="InterPro" id="IPR006241">
    <property type="entry name" value="PSII_cyt_b559_bsu"/>
</dbReference>
<dbReference type="InterPro" id="IPR006216">
    <property type="entry name" value="PSII_cyt_b559_CS"/>
</dbReference>
<dbReference type="InterPro" id="IPR013081">
    <property type="entry name" value="PSII_cyt_b559_N"/>
</dbReference>
<dbReference type="NCBIfam" id="TIGR01333">
    <property type="entry name" value="cyt_b559_beta"/>
    <property type="match status" value="1"/>
</dbReference>
<dbReference type="Pfam" id="PF00283">
    <property type="entry name" value="Cytochrom_B559"/>
    <property type="match status" value="1"/>
</dbReference>
<dbReference type="PIRSF" id="PIRSF000037">
    <property type="entry name" value="PsbF"/>
    <property type="match status" value="1"/>
</dbReference>
<dbReference type="SUPFAM" id="SSF161045">
    <property type="entry name" value="Cytochrome b559 subunits"/>
    <property type="match status" value="1"/>
</dbReference>
<dbReference type="PROSITE" id="PS00537">
    <property type="entry name" value="CYTOCHROME_B559"/>
    <property type="match status" value="1"/>
</dbReference>
<feature type="chain" id="PRO_0000233657" description="Cytochrome b559 subunit beta">
    <location>
        <begin position="1"/>
        <end position="43"/>
    </location>
</feature>
<feature type="transmembrane region" description="Helical" evidence="1">
    <location>
        <begin position="18"/>
        <end position="34"/>
    </location>
</feature>
<feature type="binding site" description="axial binding residue" evidence="1">
    <location>
        <position position="22"/>
    </location>
    <ligand>
        <name>heme</name>
        <dbReference type="ChEBI" id="CHEBI:30413"/>
        <note>ligand shared with alpha subunit</note>
    </ligand>
    <ligandPart>
        <name>Fe</name>
        <dbReference type="ChEBI" id="CHEBI:18248"/>
    </ligandPart>
</feature>
<organism>
    <name type="scientific">Synechococcus sp. (strain JA-2-3B'a(2-13))</name>
    <name type="common">Cyanobacteria bacterium Yellowstone B-Prime</name>
    <dbReference type="NCBI Taxonomy" id="321332"/>
    <lineage>
        <taxon>Bacteria</taxon>
        <taxon>Bacillati</taxon>
        <taxon>Cyanobacteriota</taxon>
        <taxon>Cyanophyceae</taxon>
        <taxon>Synechococcales</taxon>
        <taxon>Synechococcaceae</taxon>
        <taxon>Synechococcus</taxon>
    </lineage>
</organism>
<keyword id="KW-0249">Electron transport</keyword>
<keyword id="KW-0349">Heme</keyword>
<keyword id="KW-0408">Iron</keyword>
<keyword id="KW-0472">Membrane</keyword>
<keyword id="KW-0479">Metal-binding</keyword>
<keyword id="KW-0602">Photosynthesis</keyword>
<keyword id="KW-0604">Photosystem II</keyword>
<keyword id="KW-1185">Reference proteome</keyword>
<keyword id="KW-0793">Thylakoid</keyword>
<keyword id="KW-0812">Transmembrane</keyword>
<keyword id="KW-1133">Transmembrane helix</keyword>
<keyword id="KW-0813">Transport</keyword>
<evidence type="ECO:0000255" key="1">
    <source>
        <dbReference type="HAMAP-Rule" id="MF_00643"/>
    </source>
</evidence>
<sequence>MATKSDEPVFYPVFTVRWLAVHTLAIPTVFFLGAIAAMQFIQR</sequence>
<gene>
    <name evidence="1" type="primary">psbF</name>
    <name type="ordered locus">CYB_1496</name>
</gene>